<protein>
    <recommendedName>
        <fullName evidence="1">2-C-methyl-D-erythritol 2,4-cyclodiphosphate synthase</fullName>
        <shortName evidence="1">MECDP-synthase</shortName>
        <shortName evidence="1">MECPP-synthase</shortName>
        <shortName evidence="1">MECPS</shortName>
        <ecNumber evidence="1">4.6.1.12</ecNumber>
    </recommendedName>
</protein>
<proteinExistence type="inferred from homology"/>
<name>ISPF_XANCB</name>
<keyword id="KW-0414">Isoprene biosynthesis</keyword>
<keyword id="KW-0456">Lyase</keyword>
<keyword id="KW-0479">Metal-binding</keyword>
<accession>B0RU02</accession>
<evidence type="ECO:0000255" key="1">
    <source>
        <dbReference type="HAMAP-Rule" id="MF_00107"/>
    </source>
</evidence>
<feature type="chain" id="PRO_1000094296" description="2-C-methyl-D-erythritol 2,4-cyclodiphosphate synthase">
    <location>
        <begin position="1"/>
        <end position="163"/>
    </location>
</feature>
<feature type="binding site" evidence="1">
    <location>
        <begin position="12"/>
        <end position="14"/>
    </location>
    <ligand>
        <name>4-CDP-2-C-methyl-D-erythritol 2-phosphate</name>
        <dbReference type="ChEBI" id="CHEBI:57919"/>
    </ligand>
</feature>
<feature type="binding site" evidence="1">
    <location>
        <position position="12"/>
    </location>
    <ligand>
        <name>a divalent metal cation</name>
        <dbReference type="ChEBI" id="CHEBI:60240"/>
    </ligand>
</feature>
<feature type="binding site" evidence="1">
    <location>
        <position position="14"/>
    </location>
    <ligand>
        <name>a divalent metal cation</name>
        <dbReference type="ChEBI" id="CHEBI:60240"/>
    </ligand>
</feature>
<feature type="binding site" evidence="1">
    <location>
        <begin position="38"/>
        <end position="39"/>
    </location>
    <ligand>
        <name>4-CDP-2-C-methyl-D-erythritol 2-phosphate</name>
        <dbReference type="ChEBI" id="CHEBI:57919"/>
    </ligand>
</feature>
<feature type="binding site" evidence="1">
    <location>
        <position position="46"/>
    </location>
    <ligand>
        <name>a divalent metal cation</name>
        <dbReference type="ChEBI" id="CHEBI:60240"/>
    </ligand>
</feature>
<feature type="binding site" evidence="1">
    <location>
        <begin position="60"/>
        <end position="62"/>
    </location>
    <ligand>
        <name>4-CDP-2-C-methyl-D-erythritol 2-phosphate</name>
        <dbReference type="ChEBI" id="CHEBI:57919"/>
    </ligand>
</feature>
<feature type="binding site" evidence="1">
    <location>
        <begin position="136"/>
        <end position="139"/>
    </location>
    <ligand>
        <name>4-CDP-2-C-methyl-D-erythritol 2-phosphate</name>
        <dbReference type="ChEBI" id="CHEBI:57919"/>
    </ligand>
</feature>
<feature type="binding site" evidence="1">
    <location>
        <position position="143"/>
    </location>
    <ligand>
        <name>4-CDP-2-C-methyl-D-erythritol 2-phosphate</name>
        <dbReference type="ChEBI" id="CHEBI:57919"/>
    </ligand>
</feature>
<feature type="binding site" evidence="1">
    <location>
        <position position="146"/>
    </location>
    <ligand>
        <name>4-CDP-2-C-methyl-D-erythritol 2-phosphate</name>
        <dbReference type="ChEBI" id="CHEBI:57919"/>
    </ligand>
</feature>
<feature type="site" description="Transition state stabilizer" evidence="1">
    <location>
        <position position="38"/>
    </location>
</feature>
<feature type="site" description="Transition state stabilizer" evidence="1">
    <location>
        <position position="137"/>
    </location>
</feature>
<gene>
    <name evidence="1" type="primary">ispF</name>
    <name type="ordered locus">xcc-b100_2556</name>
</gene>
<comment type="function">
    <text evidence="1">Involved in the biosynthesis of isopentenyl diphosphate (IPP) and dimethylallyl diphosphate (DMAPP), two major building blocks of isoprenoid compounds. Catalyzes the conversion of 4-diphosphocytidyl-2-C-methyl-D-erythritol 2-phosphate (CDP-ME2P) to 2-C-methyl-D-erythritol 2,4-cyclodiphosphate (ME-CPP) with a corresponding release of cytidine 5-monophosphate (CMP).</text>
</comment>
<comment type="catalytic activity">
    <reaction evidence="1">
        <text>4-CDP-2-C-methyl-D-erythritol 2-phosphate = 2-C-methyl-D-erythritol 2,4-cyclic diphosphate + CMP</text>
        <dbReference type="Rhea" id="RHEA:23864"/>
        <dbReference type="ChEBI" id="CHEBI:57919"/>
        <dbReference type="ChEBI" id="CHEBI:58483"/>
        <dbReference type="ChEBI" id="CHEBI:60377"/>
        <dbReference type="EC" id="4.6.1.12"/>
    </reaction>
</comment>
<comment type="cofactor">
    <cofactor evidence="1">
        <name>a divalent metal cation</name>
        <dbReference type="ChEBI" id="CHEBI:60240"/>
    </cofactor>
    <text evidence="1">Binds 1 divalent metal cation per subunit.</text>
</comment>
<comment type="pathway">
    <text evidence="1">Isoprenoid biosynthesis; isopentenyl diphosphate biosynthesis via DXP pathway; isopentenyl diphosphate from 1-deoxy-D-xylulose 5-phosphate: step 4/6.</text>
</comment>
<comment type="subunit">
    <text evidence="1">Homotrimer.</text>
</comment>
<comment type="similarity">
    <text evidence="1">Belongs to the IspF family.</text>
</comment>
<sequence>MSFNFRIGQGYDVHAFGPGDHLMLGGVRMAHSHGVLAHSDGDVVLHALCDAMLGGLALGDIGVHFPPSDARWKGADSAQFVQHCDQLLRDRGWRVGNADITVICERPKVGPHALAMRERIAGLLAIELDAVSVKATTSEKLGFTGRSEGIAAQAAVLLGKIAA</sequence>
<dbReference type="EC" id="4.6.1.12" evidence="1"/>
<dbReference type="EMBL" id="AM920689">
    <property type="protein sequence ID" value="CAP51916.1"/>
    <property type="molecule type" value="Genomic_DNA"/>
</dbReference>
<dbReference type="SMR" id="B0RU02"/>
<dbReference type="KEGG" id="xca:xcc-b100_2556"/>
<dbReference type="HOGENOM" id="CLU_084630_2_0_6"/>
<dbReference type="UniPathway" id="UPA00056">
    <property type="reaction ID" value="UER00095"/>
</dbReference>
<dbReference type="Proteomes" id="UP000001188">
    <property type="component" value="Chromosome"/>
</dbReference>
<dbReference type="GO" id="GO:0008685">
    <property type="term" value="F:2-C-methyl-D-erythritol 2,4-cyclodiphosphate synthase activity"/>
    <property type="evidence" value="ECO:0007669"/>
    <property type="project" value="UniProtKB-UniRule"/>
</dbReference>
<dbReference type="GO" id="GO:0046872">
    <property type="term" value="F:metal ion binding"/>
    <property type="evidence" value="ECO:0007669"/>
    <property type="project" value="UniProtKB-KW"/>
</dbReference>
<dbReference type="GO" id="GO:0019288">
    <property type="term" value="P:isopentenyl diphosphate biosynthetic process, methylerythritol 4-phosphate pathway"/>
    <property type="evidence" value="ECO:0007669"/>
    <property type="project" value="UniProtKB-UniRule"/>
</dbReference>
<dbReference type="GO" id="GO:0016114">
    <property type="term" value="P:terpenoid biosynthetic process"/>
    <property type="evidence" value="ECO:0007669"/>
    <property type="project" value="InterPro"/>
</dbReference>
<dbReference type="CDD" id="cd00554">
    <property type="entry name" value="MECDP_synthase"/>
    <property type="match status" value="1"/>
</dbReference>
<dbReference type="FunFam" id="3.30.1330.50:FF:000001">
    <property type="entry name" value="2-C-methyl-D-erythritol 2,4-cyclodiphosphate synthase"/>
    <property type="match status" value="1"/>
</dbReference>
<dbReference type="Gene3D" id="3.30.1330.50">
    <property type="entry name" value="2-C-methyl-D-erythritol 2,4-cyclodiphosphate synthase"/>
    <property type="match status" value="1"/>
</dbReference>
<dbReference type="HAMAP" id="MF_00107">
    <property type="entry name" value="IspF"/>
    <property type="match status" value="1"/>
</dbReference>
<dbReference type="InterPro" id="IPR003526">
    <property type="entry name" value="MECDP_synthase"/>
</dbReference>
<dbReference type="InterPro" id="IPR020555">
    <property type="entry name" value="MECDP_synthase_CS"/>
</dbReference>
<dbReference type="InterPro" id="IPR036571">
    <property type="entry name" value="MECDP_synthase_sf"/>
</dbReference>
<dbReference type="NCBIfam" id="TIGR00151">
    <property type="entry name" value="ispF"/>
    <property type="match status" value="1"/>
</dbReference>
<dbReference type="PANTHER" id="PTHR43181">
    <property type="entry name" value="2-C-METHYL-D-ERYTHRITOL 2,4-CYCLODIPHOSPHATE SYNTHASE, CHLOROPLASTIC"/>
    <property type="match status" value="1"/>
</dbReference>
<dbReference type="PANTHER" id="PTHR43181:SF1">
    <property type="entry name" value="2-C-METHYL-D-ERYTHRITOL 2,4-CYCLODIPHOSPHATE SYNTHASE, CHLOROPLASTIC"/>
    <property type="match status" value="1"/>
</dbReference>
<dbReference type="Pfam" id="PF02542">
    <property type="entry name" value="YgbB"/>
    <property type="match status" value="1"/>
</dbReference>
<dbReference type="SUPFAM" id="SSF69765">
    <property type="entry name" value="IpsF-like"/>
    <property type="match status" value="1"/>
</dbReference>
<dbReference type="PROSITE" id="PS01350">
    <property type="entry name" value="ISPF"/>
    <property type="match status" value="1"/>
</dbReference>
<reference key="1">
    <citation type="journal article" date="2008" name="J. Biotechnol.">
        <title>The genome of Xanthomonas campestris pv. campestris B100 and its use for the reconstruction of metabolic pathways involved in xanthan biosynthesis.</title>
        <authorList>
            <person name="Vorhoelter F.-J."/>
            <person name="Schneiker S."/>
            <person name="Goesmann A."/>
            <person name="Krause L."/>
            <person name="Bekel T."/>
            <person name="Kaiser O."/>
            <person name="Linke B."/>
            <person name="Patschkowski T."/>
            <person name="Rueckert C."/>
            <person name="Schmid J."/>
            <person name="Sidhu V.K."/>
            <person name="Sieber V."/>
            <person name="Tauch A."/>
            <person name="Watt S.A."/>
            <person name="Weisshaar B."/>
            <person name="Becker A."/>
            <person name="Niehaus K."/>
            <person name="Puehler A."/>
        </authorList>
    </citation>
    <scope>NUCLEOTIDE SEQUENCE [LARGE SCALE GENOMIC DNA]</scope>
    <source>
        <strain>B100</strain>
    </source>
</reference>
<organism>
    <name type="scientific">Xanthomonas campestris pv. campestris (strain B100)</name>
    <dbReference type="NCBI Taxonomy" id="509169"/>
    <lineage>
        <taxon>Bacteria</taxon>
        <taxon>Pseudomonadati</taxon>
        <taxon>Pseudomonadota</taxon>
        <taxon>Gammaproteobacteria</taxon>
        <taxon>Lysobacterales</taxon>
        <taxon>Lysobacteraceae</taxon>
        <taxon>Xanthomonas</taxon>
    </lineage>
</organism>